<organism>
    <name type="scientific">Bos taurus</name>
    <name type="common">Bovine</name>
    <dbReference type="NCBI Taxonomy" id="9913"/>
    <lineage>
        <taxon>Eukaryota</taxon>
        <taxon>Metazoa</taxon>
        <taxon>Chordata</taxon>
        <taxon>Craniata</taxon>
        <taxon>Vertebrata</taxon>
        <taxon>Euteleostomi</taxon>
        <taxon>Mammalia</taxon>
        <taxon>Eutheria</taxon>
        <taxon>Laurasiatheria</taxon>
        <taxon>Artiodactyla</taxon>
        <taxon>Ruminantia</taxon>
        <taxon>Pecora</taxon>
        <taxon>Bovidae</taxon>
        <taxon>Bovinae</taxon>
        <taxon>Bos</taxon>
    </lineage>
</organism>
<keyword id="KW-0010">Activator</keyword>
<keyword id="KW-0175">Coiled coil</keyword>
<keyword id="KW-0963">Cytoplasm</keyword>
<keyword id="KW-0238">DNA-binding</keyword>
<keyword id="KW-0479">Metal-binding</keyword>
<keyword id="KW-0539">Nucleus</keyword>
<keyword id="KW-1185">Reference proteome</keyword>
<keyword id="KW-0678">Repressor</keyword>
<keyword id="KW-0804">Transcription</keyword>
<keyword id="KW-0805">Transcription regulation</keyword>
<keyword id="KW-0862">Zinc</keyword>
<keyword id="KW-0863">Zinc-finger</keyword>
<sequence>MPGFTCCVPGCYNNSHRDKALHFYTFPKDAELRRLWLKNVSRAGVSGCFSTFQPTTGHRLCSVHFQGGRKTYTVRVPTIFPLRGVNERKVARRPAGAAAARRRQQQQQQQQQQQQQQQQQQPSPSASTAQTTQLQPNLVSASAAVLLTLQAAVDSSQAPGTVPPVPTTPTGEDVKPIDLTVQVEFAAAEGAAAAAAASELEAATAGLEAAECPMGPQLVVVGEEGFPDTGSDHSYSLSSGTTEEELLRKLNEQRDILALMEVKMKEMKGSIRHLRLTEAKLREELREKDRLLAMAVIRKKHGM</sequence>
<dbReference type="EMBL" id="BC142469">
    <property type="protein sequence ID" value="AAI42470.1"/>
    <property type="molecule type" value="mRNA"/>
</dbReference>
<dbReference type="RefSeq" id="NP_001098464.1">
    <property type="nucleotide sequence ID" value="NM_001104994.1"/>
</dbReference>
<dbReference type="BMRB" id="A5PKF5"/>
<dbReference type="SMR" id="A5PKF5"/>
<dbReference type="FunCoup" id="A5PKF5">
    <property type="interactions" value="2369"/>
</dbReference>
<dbReference type="STRING" id="9913.ENSBTAP00000008406"/>
<dbReference type="PaxDb" id="9913-ENSBTAP00000008406"/>
<dbReference type="Ensembl" id="ENSBTAT00000008406.4">
    <property type="protein sequence ID" value="ENSBTAP00000008406.4"/>
    <property type="gene ID" value="ENSBTAG00000006411.4"/>
</dbReference>
<dbReference type="Ensembl" id="ENSBTAT00000109943.1">
    <property type="protein sequence ID" value="ENSBTAP00000095865.1"/>
    <property type="gene ID" value="ENSBTAG00000006411.4"/>
</dbReference>
<dbReference type="GeneID" id="539845"/>
<dbReference type="KEGG" id="bta:539845"/>
<dbReference type="CTD" id="57215"/>
<dbReference type="VGNC" id="VGNC:35819">
    <property type="gene designation" value="THAP11"/>
</dbReference>
<dbReference type="eggNOG" id="ENOG502QQ1Z">
    <property type="taxonomic scope" value="Eukaryota"/>
</dbReference>
<dbReference type="GeneTree" id="ENSGT00390000006585"/>
<dbReference type="HOGENOM" id="CLU_090879_1_0_1"/>
<dbReference type="InParanoid" id="A5PKF5"/>
<dbReference type="OrthoDB" id="8948150at2759"/>
<dbReference type="TreeFam" id="TF331359"/>
<dbReference type="Proteomes" id="UP000009136">
    <property type="component" value="Chromosome 18"/>
</dbReference>
<dbReference type="GO" id="GO:0005829">
    <property type="term" value="C:cytosol"/>
    <property type="evidence" value="ECO:0007669"/>
    <property type="project" value="Ensembl"/>
</dbReference>
<dbReference type="GO" id="GO:0005654">
    <property type="term" value="C:nucleoplasm"/>
    <property type="evidence" value="ECO:0000318"/>
    <property type="project" value="GO_Central"/>
</dbReference>
<dbReference type="GO" id="GO:0003677">
    <property type="term" value="F:DNA binding"/>
    <property type="evidence" value="ECO:0000250"/>
    <property type="project" value="UniProtKB"/>
</dbReference>
<dbReference type="GO" id="GO:0001228">
    <property type="term" value="F:DNA-binding transcription activator activity, RNA polymerase II-specific"/>
    <property type="evidence" value="ECO:0007669"/>
    <property type="project" value="Ensembl"/>
</dbReference>
<dbReference type="GO" id="GO:0001227">
    <property type="term" value="F:DNA-binding transcription repressor activity, RNA polymerase II-specific"/>
    <property type="evidence" value="ECO:0007669"/>
    <property type="project" value="Ensembl"/>
</dbReference>
<dbReference type="GO" id="GO:0000978">
    <property type="term" value="F:RNA polymerase II cis-regulatory region sequence-specific DNA binding"/>
    <property type="evidence" value="ECO:0000318"/>
    <property type="project" value="GO_Central"/>
</dbReference>
<dbReference type="GO" id="GO:0008270">
    <property type="term" value="F:zinc ion binding"/>
    <property type="evidence" value="ECO:0000250"/>
    <property type="project" value="UniProtKB"/>
</dbReference>
<dbReference type="GO" id="GO:0008283">
    <property type="term" value="P:cell population proliferation"/>
    <property type="evidence" value="ECO:0007669"/>
    <property type="project" value="Ensembl"/>
</dbReference>
<dbReference type="GO" id="GO:0022900">
    <property type="term" value="P:electron transport chain"/>
    <property type="evidence" value="ECO:0007669"/>
    <property type="project" value="Ensembl"/>
</dbReference>
<dbReference type="GO" id="GO:0043524">
    <property type="term" value="P:negative regulation of neuron apoptotic process"/>
    <property type="evidence" value="ECO:0007669"/>
    <property type="project" value="Ensembl"/>
</dbReference>
<dbReference type="GO" id="GO:0030182">
    <property type="term" value="P:neuron differentiation"/>
    <property type="evidence" value="ECO:0007669"/>
    <property type="project" value="Ensembl"/>
</dbReference>
<dbReference type="GO" id="GO:1903108">
    <property type="term" value="P:regulation of mitochondrial transcription"/>
    <property type="evidence" value="ECO:0007669"/>
    <property type="project" value="Ensembl"/>
</dbReference>
<dbReference type="GO" id="GO:0006357">
    <property type="term" value="P:regulation of transcription by RNA polymerase II"/>
    <property type="evidence" value="ECO:0000318"/>
    <property type="project" value="GO_Central"/>
</dbReference>
<dbReference type="CDD" id="cd22291">
    <property type="entry name" value="cc_THAP11_C"/>
    <property type="match status" value="1"/>
</dbReference>
<dbReference type="InterPro" id="IPR006612">
    <property type="entry name" value="THAP_Znf"/>
</dbReference>
<dbReference type="PANTHER" id="PTHR22794">
    <property type="entry name" value="THAP DOMAIN PROTEIN 11"/>
    <property type="match status" value="1"/>
</dbReference>
<dbReference type="PANTHER" id="PTHR22794:SF2">
    <property type="entry name" value="THAP DOMAIN-CONTAINING PROTEIN 11"/>
    <property type="match status" value="1"/>
</dbReference>
<dbReference type="Pfam" id="PF05485">
    <property type="entry name" value="THAP"/>
    <property type="match status" value="1"/>
</dbReference>
<dbReference type="SMART" id="SM00692">
    <property type="entry name" value="DM3"/>
    <property type="match status" value="1"/>
</dbReference>
<dbReference type="SMART" id="SM00980">
    <property type="entry name" value="THAP"/>
    <property type="match status" value="1"/>
</dbReference>
<dbReference type="SUPFAM" id="SSF57716">
    <property type="entry name" value="Glucocorticoid receptor-like (DNA-binding domain)"/>
    <property type="match status" value="1"/>
</dbReference>
<dbReference type="PROSITE" id="PS50950">
    <property type="entry name" value="ZF_THAP"/>
    <property type="match status" value="1"/>
</dbReference>
<feature type="chain" id="PRO_0000355148" description="THAP domain-containing protein 11">
    <location>
        <begin position="1"/>
        <end position="303"/>
    </location>
</feature>
<feature type="zinc finger region" description="THAP-type" evidence="7">
    <location>
        <begin position="6"/>
        <end position="64"/>
    </location>
</feature>
<feature type="region of interest" description="Disordered" evidence="8">
    <location>
        <begin position="85"/>
        <end position="132"/>
    </location>
</feature>
<feature type="region of interest" description="Disordered" evidence="8">
    <location>
        <begin position="155"/>
        <end position="174"/>
    </location>
</feature>
<feature type="coiled-coil region" evidence="6">
    <location>
        <begin position="244"/>
        <end position="294"/>
    </location>
</feature>
<feature type="short sequence motif" description="HCFC1-binding motif (HBM)" evidence="1">
    <location>
        <begin position="232"/>
        <end position="235"/>
    </location>
</feature>
<feature type="compositionally biased region" description="Low complexity" evidence="8">
    <location>
        <begin position="93"/>
        <end position="132"/>
    </location>
</feature>
<evidence type="ECO:0000250" key="1"/>
<evidence type="ECO:0000250" key="2">
    <source>
        <dbReference type="UniProtKB" id="Q61191"/>
    </source>
</evidence>
<evidence type="ECO:0000250" key="3">
    <source>
        <dbReference type="UniProtKB" id="Q6TGZ4"/>
    </source>
</evidence>
<evidence type="ECO:0000250" key="4">
    <source>
        <dbReference type="UniProtKB" id="Q96EK4"/>
    </source>
</evidence>
<evidence type="ECO:0000250" key="5">
    <source>
        <dbReference type="UniProtKB" id="Q9JJD0"/>
    </source>
</evidence>
<evidence type="ECO:0000255" key="6"/>
<evidence type="ECO:0000255" key="7">
    <source>
        <dbReference type="PROSITE-ProRule" id="PRU00309"/>
    </source>
</evidence>
<evidence type="ECO:0000256" key="8">
    <source>
        <dbReference type="SAM" id="MobiDB-lite"/>
    </source>
</evidence>
<evidence type="ECO:0000305" key="9"/>
<proteinExistence type="evidence at transcript level"/>
<protein>
    <recommendedName>
        <fullName>THAP domain-containing protein 11</fullName>
    </recommendedName>
</protein>
<reference key="1">
    <citation type="submission" date="2007-06" db="EMBL/GenBank/DDBJ databases">
        <authorList>
            <consortium name="NIH - Mammalian Gene Collection (MGC) project"/>
        </authorList>
    </citation>
    <scope>NUCLEOTIDE SEQUENCE [LARGE SCALE MRNA]</scope>
    <source>
        <strain>Hereford</strain>
        <tissue>Thymus</tissue>
    </source>
</reference>
<comment type="function">
    <text evidence="2 3 4">Transcription factor, which has both transcriptional activation and repression activities (By similarity). Also modulates chromatin accessibility (By similarity). In complex with HCFC1 and ZNF143, regulates the expression of several genes, including AP2S1, ESCO2, OPHN1, RBL1, UBXN8 and ZNF32 (By similarity). May regulate the expression of genes that encode both cytoplasmic and mitochondrial ribosomal proteins (By similarity). Required for normal mitochondrial development and function. Regulates mitochondrial gene expression, including that of components of the electron transport chain (By similarity). Involved in the maintainance of pluripotency in early embryonic cells, possibly through its action on mitochondrial maturation which is required to meet high energy demands of these cells (By similarity). Required for early development of retina, preventing premature exit of retinal progenitor cells from the cell cycle. This effect may also be mediated by its action on mitochondria (By similarity). Through the regulation of MMACHC gene expression, controls cobalamin metabolism (By similarity). Required for normal brain development and neural precursor differentiation (By similarity). Involved in cell growth (By similarity).</text>
</comment>
<comment type="subunit">
    <text evidence="4">Forms homodimers (By similarity). Interacts via HBM with HCFC1 (By similarity). Forms a complex with HCFC1 and ZNF143 (By similarity).</text>
</comment>
<comment type="subcellular location">
    <subcellularLocation>
        <location evidence="4">Nucleus</location>
    </subcellularLocation>
    <subcellularLocation>
        <location evidence="4">Cytoplasm</location>
    </subcellularLocation>
    <text evidence="4 5">In oocytes, detected in the ooplasm, without evidence of its presence in the nucleus (By similarity). Found in the nucleus of undifferentiated embryonic stem cells (By similarity). Evenly distributed between nucleus and cytoplasm in skin fibroblasts (By similarity).</text>
</comment>
<comment type="similarity">
    <text evidence="9">Belongs to the THAP11 family.</text>
</comment>
<name>THA11_BOVIN</name>
<accession>A5PKF5</accession>
<gene>
    <name type="primary">THAP11</name>
</gene>